<evidence type="ECO:0000255" key="1">
    <source>
        <dbReference type="PROSITE-ProRule" id="PRU00037"/>
    </source>
</evidence>
<evidence type="ECO:0000256" key="2">
    <source>
        <dbReference type="SAM" id="MobiDB-lite"/>
    </source>
</evidence>
<evidence type="ECO:0000269" key="3">
    <source>
    </source>
</evidence>
<evidence type="ECO:0000269" key="4">
    <source>
    </source>
</evidence>
<evidence type="ECO:0000303" key="5">
    <source>
    </source>
</evidence>
<evidence type="ECO:0000305" key="6"/>
<accession>Q9UJP4</accession>
<accession>B3KQP2</accession>
<accession>O75057</accession>
<accession>Q5SY26</accession>
<accession>Q5SY28</accession>
<accession>Q8N4I6</accession>
<accession>Q8NF10</accession>
<sequence length="597" mass="66617">MERPAPLAVLPFSDPAHALSLLRGLSQLRAERKFLDVTLEAAGGRDFPAHRAVLAAASPYFRAMFAGQLRESRAERVRLHGVPPDMLQLLLDFSYTGRVAVSGDNAEPLLRAADLLQFPAVKEACGAFLQQQLDLANCLDMQDFAEAFSCSGLASAAQRFILRHVGELGAEQLERLPLARLLRYLRDDGLCVPKEEAAYQLALRWVRADPPRRAAHWPQLLEAVRLPFVRRFYLLAHVEAEPLVARCPPCLRLLREARDFQAARYDRHDRGPCPRMRPRPSTGLAEILVLVGGCDQDCDELVTVDCYNPQTGQWRYLAEFPDHLGGGYSIVALGNDIYVTGGSDGSRLYDCVWRYNSSVNEWAEVAPMLKAREYHSSSVLDGLLYVVAADSTERYDHTTDSWEALQPMTYPMDNCSTTACRGRLYAIGSLAGKETMVMQCYDPDTDLWSLVDCGQLPPWSFAPKTATLNGLMYFVRDDSAEVDVYNPTRNEWDKIPSMNQVHVGGSLAVLGGKLYVSGGYDNTFELSDVVEAYDPETRAWSVVGRLPEPTFWHGSVSIFRQFMPQTFSGGRGFELDSGSDDMDPGRPRPPRDPDELH</sequence>
<name>KLH21_HUMAN</name>
<reference key="1">
    <citation type="journal article" date="1997" name="DNA Res.">
        <title>Characterization of cDNA clones in size-fractionated cDNA libraries from human brain.</title>
        <authorList>
            <person name="Seki N."/>
            <person name="Ohira M."/>
            <person name="Nagase T."/>
            <person name="Ishikawa K."/>
            <person name="Miyajima N."/>
            <person name="Nakajima D."/>
            <person name="Nomura N."/>
            <person name="Ohara O."/>
        </authorList>
    </citation>
    <scope>NUCLEOTIDE SEQUENCE [LARGE SCALE MRNA] (ISOFORM 2)</scope>
    <source>
        <tissue>Brain</tissue>
    </source>
</reference>
<reference key="2">
    <citation type="journal article" date="2005" name="DNA Res.">
        <title>Signal sequence and keyword trap in silico for selection of full-length human cDNAs encoding secretion or membrane proteins from oligo-capped cDNA libraries.</title>
        <authorList>
            <person name="Otsuki T."/>
            <person name="Ota T."/>
            <person name="Nishikawa T."/>
            <person name="Hayashi K."/>
            <person name="Suzuki Y."/>
            <person name="Yamamoto J."/>
            <person name="Wakamatsu A."/>
            <person name="Kimura K."/>
            <person name="Sakamoto K."/>
            <person name="Hatano N."/>
            <person name="Kawai Y."/>
            <person name="Ishii S."/>
            <person name="Saito K."/>
            <person name="Kojima S."/>
            <person name="Sugiyama T."/>
            <person name="Ono T."/>
            <person name="Okano K."/>
            <person name="Yoshikawa Y."/>
            <person name="Aotsuka S."/>
            <person name="Sasaki N."/>
            <person name="Hattori A."/>
            <person name="Okumura K."/>
            <person name="Nagai K."/>
            <person name="Sugano S."/>
            <person name="Isogai T."/>
        </authorList>
    </citation>
    <scope>NUCLEOTIDE SEQUENCE [LARGE SCALE MRNA]</scope>
</reference>
<reference key="3">
    <citation type="journal article" date="2006" name="Nature">
        <title>The DNA sequence and biological annotation of human chromosome 1.</title>
        <authorList>
            <person name="Gregory S.G."/>
            <person name="Barlow K.F."/>
            <person name="McLay K.E."/>
            <person name="Kaul R."/>
            <person name="Swarbreck D."/>
            <person name="Dunham A."/>
            <person name="Scott C.E."/>
            <person name="Howe K.L."/>
            <person name="Woodfine K."/>
            <person name="Spencer C.C.A."/>
            <person name="Jones M.C."/>
            <person name="Gillson C."/>
            <person name="Searle S."/>
            <person name="Zhou Y."/>
            <person name="Kokocinski F."/>
            <person name="McDonald L."/>
            <person name="Evans R."/>
            <person name="Phillips K."/>
            <person name="Atkinson A."/>
            <person name="Cooper R."/>
            <person name="Jones C."/>
            <person name="Hall R.E."/>
            <person name="Andrews T.D."/>
            <person name="Lloyd C."/>
            <person name="Ainscough R."/>
            <person name="Almeida J.P."/>
            <person name="Ambrose K.D."/>
            <person name="Anderson F."/>
            <person name="Andrew R.W."/>
            <person name="Ashwell R.I.S."/>
            <person name="Aubin K."/>
            <person name="Babbage A.K."/>
            <person name="Bagguley C.L."/>
            <person name="Bailey J."/>
            <person name="Beasley H."/>
            <person name="Bethel G."/>
            <person name="Bird C.P."/>
            <person name="Bray-Allen S."/>
            <person name="Brown J.Y."/>
            <person name="Brown A.J."/>
            <person name="Buckley D."/>
            <person name="Burton J."/>
            <person name="Bye J."/>
            <person name="Carder C."/>
            <person name="Chapman J.C."/>
            <person name="Clark S.Y."/>
            <person name="Clarke G."/>
            <person name="Clee C."/>
            <person name="Cobley V."/>
            <person name="Collier R.E."/>
            <person name="Corby N."/>
            <person name="Coville G.J."/>
            <person name="Davies J."/>
            <person name="Deadman R."/>
            <person name="Dunn M."/>
            <person name="Earthrowl M."/>
            <person name="Ellington A.G."/>
            <person name="Errington H."/>
            <person name="Frankish A."/>
            <person name="Frankland J."/>
            <person name="French L."/>
            <person name="Garner P."/>
            <person name="Garnett J."/>
            <person name="Gay L."/>
            <person name="Ghori M.R.J."/>
            <person name="Gibson R."/>
            <person name="Gilby L.M."/>
            <person name="Gillett W."/>
            <person name="Glithero R.J."/>
            <person name="Grafham D.V."/>
            <person name="Griffiths C."/>
            <person name="Griffiths-Jones S."/>
            <person name="Grocock R."/>
            <person name="Hammond S."/>
            <person name="Harrison E.S.I."/>
            <person name="Hart E."/>
            <person name="Haugen E."/>
            <person name="Heath P.D."/>
            <person name="Holmes S."/>
            <person name="Holt K."/>
            <person name="Howden P.J."/>
            <person name="Hunt A.R."/>
            <person name="Hunt S.E."/>
            <person name="Hunter G."/>
            <person name="Isherwood J."/>
            <person name="James R."/>
            <person name="Johnson C."/>
            <person name="Johnson D."/>
            <person name="Joy A."/>
            <person name="Kay M."/>
            <person name="Kershaw J.K."/>
            <person name="Kibukawa M."/>
            <person name="Kimberley A.M."/>
            <person name="King A."/>
            <person name="Knights A.J."/>
            <person name="Lad H."/>
            <person name="Laird G."/>
            <person name="Lawlor S."/>
            <person name="Leongamornlert D.A."/>
            <person name="Lloyd D.M."/>
            <person name="Loveland J."/>
            <person name="Lovell J."/>
            <person name="Lush M.J."/>
            <person name="Lyne R."/>
            <person name="Martin S."/>
            <person name="Mashreghi-Mohammadi M."/>
            <person name="Matthews L."/>
            <person name="Matthews N.S.W."/>
            <person name="McLaren S."/>
            <person name="Milne S."/>
            <person name="Mistry S."/>
            <person name="Moore M.J.F."/>
            <person name="Nickerson T."/>
            <person name="O'Dell C.N."/>
            <person name="Oliver K."/>
            <person name="Palmeiri A."/>
            <person name="Palmer S.A."/>
            <person name="Parker A."/>
            <person name="Patel D."/>
            <person name="Pearce A.V."/>
            <person name="Peck A.I."/>
            <person name="Pelan S."/>
            <person name="Phelps K."/>
            <person name="Phillimore B.J."/>
            <person name="Plumb R."/>
            <person name="Rajan J."/>
            <person name="Raymond C."/>
            <person name="Rouse G."/>
            <person name="Saenphimmachak C."/>
            <person name="Sehra H.K."/>
            <person name="Sheridan E."/>
            <person name="Shownkeen R."/>
            <person name="Sims S."/>
            <person name="Skuce C.D."/>
            <person name="Smith M."/>
            <person name="Steward C."/>
            <person name="Subramanian S."/>
            <person name="Sycamore N."/>
            <person name="Tracey A."/>
            <person name="Tromans A."/>
            <person name="Van Helmond Z."/>
            <person name="Wall M."/>
            <person name="Wallis J.M."/>
            <person name="White S."/>
            <person name="Whitehead S.L."/>
            <person name="Wilkinson J.E."/>
            <person name="Willey D.L."/>
            <person name="Williams H."/>
            <person name="Wilming L."/>
            <person name="Wray P.W."/>
            <person name="Wu Z."/>
            <person name="Coulson A."/>
            <person name="Vaudin M."/>
            <person name="Sulston J.E."/>
            <person name="Durbin R.M."/>
            <person name="Hubbard T."/>
            <person name="Wooster R."/>
            <person name="Dunham I."/>
            <person name="Carter N.P."/>
            <person name="McVean G."/>
            <person name="Ross M.T."/>
            <person name="Harrow J."/>
            <person name="Olson M.V."/>
            <person name="Beck S."/>
            <person name="Rogers J."/>
            <person name="Bentley D.R."/>
        </authorList>
    </citation>
    <scope>NUCLEOTIDE SEQUENCE [LARGE SCALE GENOMIC DNA]</scope>
</reference>
<reference key="4">
    <citation type="submission" date="2005-07" db="EMBL/GenBank/DDBJ databases">
        <authorList>
            <person name="Mural R.J."/>
            <person name="Istrail S."/>
            <person name="Sutton G.G."/>
            <person name="Florea L."/>
            <person name="Halpern A.L."/>
            <person name="Mobarry C.M."/>
            <person name="Lippert R."/>
            <person name="Walenz B."/>
            <person name="Shatkay H."/>
            <person name="Dew I."/>
            <person name="Miller J.R."/>
            <person name="Flanigan M.J."/>
            <person name="Edwards N.J."/>
            <person name="Bolanos R."/>
            <person name="Fasulo D."/>
            <person name="Halldorsson B.V."/>
            <person name="Hannenhalli S."/>
            <person name="Turner R."/>
            <person name="Yooseph S."/>
            <person name="Lu F."/>
            <person name="Nusskern D.R."/>
            <person name="Shue B.C."/>
            <person name="Zheng X.H."/>
            <person name="Zhong F."/>
            <person name="Delcher A.L."/>
            <person name="Huson D.H."/>
            <person name="Kravitz S.A."/>
            <person name="Mouchard L."/>
            <person name="Reinert K."/>
            <person name="Remington K.A."/>
            <person name="Clark A.G."/>
            <person name="Waterman M.S."/>
            <person name="Eichler E.E."/>
            <person name="Adams M.D."/>
            <person name="Hunkapiller M.W."/>
            <person name="Myers E.W."/>
            <person name="Venter J.C."/>
        </authorList>
    </citation>
    <scope>NUCLEOTIDE SEQUENCE [LARGE SCALE GENOMIC DNA]</scope>
</reference>
<reference key="5">
    <citation type="journal article" date="2004" name="Genome Res.">
        <title>The status, quality, and expansion of the NIH full-length cDNA project: the Mammalian Gene Collection (MGC).</title>
        <authorList>
            <consortium name="The MGC Project Team"/>
        </authorList>
    </citation>
    <scope>NUCLEOTIDE SEQUENCE [LARGE SCALE MRNA] (ISOFORM 1)</scope>
    <source>
        <tissue>Hippocampus</tissue>
        <tissue>Lung carcinoma</tissue>
    </source>
</reference>
<reference key="6">
    <citation type="submission" date="2002-07" db="EMBL/GenBank/DDBJ databases">
        <title>The nucleotide sequence of a long cDNA clone isolated from human spleen.</title>
        <authorList>
            <person name="Jikuya H."/>
            <person name="Takano J."/>
            <person name="Kikuno R."/>
            <person name="Nagase T."/>
            <person name="Ohara O."/>
        </authorList>
    </citation>
    <scope>NUCLEOTIDE SEQUENCE [LARGE SCALE MRNA] OF 51-597 (ISOFORM 1)</scope>
    <source>
        <tissue>Spleen</tissue>
    </source>
</reference>
<reference key="7">
    <citation type="submission" date="2008-02" db="UniProtKB">
        <authorList>
            <person name="Bienvenut W.V."/>
            <person name="Dhillon A.S."/>
            <person name="Kolch W."/>
        </authorList>
    </citation>
    <scope>PROTEIN SEQUENCE OF 52-62; 99-122 AND 424-433 (ISOFORMS 1/2)</scope>
    <scope>PROTEIN SEQUENCE OF 561-571 (ISOFORM 1)</scope>
    <scope>IDENTIFICATION BY MASS SPECTROMETRY</scope>
    <source>
        <tissue>Hepatoma</tissue>
    </source>
</reference>
<reference key="8">
    <citation type="journal article" date="2003" name="Nat. Cell Biol.">
        <title>Targeting of protein ubiquitination by BTB-Cullin 3-Roc1 ubiquitin ligases.</title>
        <authorList>
            <person name="Furukawa M."/>
            <person name="He Y.J."/>
            <person name="Borchers C."/>
            <person name="Xiong Y."/>
        </authorList>
    </citation>
    <scope>FUNCTION AS AN E3 UBIQUITIN-PROTEIN LIGASE</scope>
    <scope>INTERACTION WITH CUL3</scope>
</reference>
<reference key="9">
    <citation type="journal article" date="2009" name="J. Cell Biol.">
        <title>The Cul3-KLHL21 E3 ubiquitin ligase targets aurora B to midzone microtubules in anaphase and is required for cytokinesis.</title>
        <authorList>
            <person name="Maerki S."/>
            <person name="Olma M.H."/>
            <person name="Staubli T."/>
            <person name="Steigemann P."/>
            <person name="Gerlich D.W."/>
            <person name="Quadroni M."/>
            <person name="Sumara I."/>
            <person name="Peter M."/>
        </authorList>
    </citation>
    <scope>FUNCTION</scope>
    <scope>SUBCELLULAR LOCATION</scope>
    <scope>IDENTIFICATION IN A BCR (BTB-CUL3-RBX1) E3 UBIQUITIN LIGASE COMPLEX</scope>
    <scope>MUTAGENESIS OF 114-ASP--GLN-117</scope>
</reference>
<gene>
    <name type="primary">KLHL21</name>
    <name type="synonym">KIAA0469</name>
</gene>
<dbReference type="EMBL" id="AB007938">
    <property type="protein sequence ID" value="BAA32314.2"/>
    <property type="status" value="ALT_INIT"/>
    <property type="molecule type" value="mRNA"/>
</dbReference>
<dbReference type="EMBL" id="AK075305">
    <property type="protein sequence ID" value="BAG52104.1"/>
    <property type="molecule type" value="mRNA"/>
</dbReference>
<dbReference type="EMBL" id="AL591866">
    <property type="status" value="NOT_ANNOTATED_CDS"/>
    <property type="molecule type" value="Genomic_DNA"/>
</dbReference>
<dbReference type="EMBL" id="CH471130">
    <property type="protein sequence ID" value="EAW71559.1"/>
    <property type="molecule type" value="Genomic_DNA"/>
</dbReference>
<dbReference type="EMBL" id="BC034039">
    <property type="protein sequence ID" value="AAH34039.3"/>
    <property type="molecule type" value="mRNA"/>
</dbReference>
<dbReference type="EMBL" id="BC091648">
    <property type="protein sequence ID" value="AAH91648.1"/>
    <property type="molecule type" value="mRNA"/>
</dbReference>
<dbReference type="EMBL" id="AK090472">
    <property type="protein sequence ID" value="BAC03453.1"/>
    <property type="molecule type" value="mRNA"/>
</dbReference>
<dbReference type="CCDS" id="CCDS30575.1">
    <molecule id="Q9UJP4-1"/>
</dbReference>
<dbReference type="RefSeq" id="NP_055666.2">
    <molecule id="Q9UJP4-1"/>
    <property type="nucleotide sequence ID" value="NM_014851.3"/>
</dbReference>
<dbReference type="SMR" id="Q9UJP4"/>
<dbReference type="BioGRID" id="115232">
    <property type="interactions" value="153"/>
</dbReference>
<dbReference type="ComplexPortal" id="CPX-8110">
    <property type="entry name" value="CRL3 E3 ubiquitin ligase complex, KLHL21 variant"/>
</dbReference>
<dbReference type="FunCoup" id="Q9UJP4">
    <property type="interactions" value="263"/>
</dbReference>
<dbReference type="IntAct" id="Q9UJP4">
    <property type="interactions" value="40"/>
</dbReference>
<dbReference type="MINT" id="Q9UJP4"/>
<dbReference type="STRING" id="9606.ENSP00000366886"/>
<dbReference type="iPTMnet" id="Q9UJP4"/>
<dbReference type="PhosphoSitePlus" id="Q9UJP4"/>
<dbReference type="BioMuta" id="KLHL21"/>
<dbReference type="DMDM" id="172044863"/>
<dbReference type="jPOST" id="Q9UJP4"/>
<dbReference type="MassIVE" id="Q9UJP4"/>
<dbReference type="PaxDb" id="9606-ENSP00000366886"/>
<dbReference type="PeptideAtlas" id="Q9UJP4"/>
<dbReference type="ProteomicsDB" id="84635">
    <molecule id="Q9UJP4-1"/>
</dbReference>
<dbReference type="ProteomicsDB" id="84636">
    <molecule id="Q9UJP4-2"/>
</dbReference>
<dbReference type="Pumba" id="Q9UJP4"/>
<dbReference type="Antibodypedia" id="46561">
    <property type="antibodies" value="95 antibodies from 25 providers"/>
</dbReference>
<dbReference type="DNASU" id="9903"/>
<dbReference type="Ensembl" id="ENST00000377658.8">
    <molecule id="Q9UJP4-1"/>
    <property type="protein sequence ID" value="ENSP00000366886.4"/>
    <property type="gene ID" value="ENSG00000162413.17"/>
</dbReference>
<dbReference type="Ensembl" id="ENST00000377663.3">
    <molecule id="Q9UJP4-2"/>
    <property type="protein sequence ID" value="ENSP00000366891.3"/>
    <property type="gene ID" value="ENSG00000162413.17"/>
</dbReference>
<dbReference type="GeneID" id="9903"/>
<dbReference type="KEGG" id="hsa:9903"/>
<dbReference type="MANE-Select" id="ENST00000377658.8">
    <property type="protein sequence ID" value="ENSP00000366886.4"/>
    <property type="RefSeq nucleotide sequence ID" value="NM_014851.4"/>
    <property type="RefSeq protein sequence ID" value="NP_055666.2"/>
</dbReference>
<dbReference type="UCSC" id="uc001anz.2">
    <molecule id="Q9UJP4-1"/>
    <property type="organism name" value="human"/>
</dbReference>
<dbReference type="AGR" id="HGNC:29041"/>
<dbReference type="CTD" id="9903"/>
<dbReference type="DisGeNET" id="9903"/>
<dbReference type="GeneCards" id="KLHL21"/>
<dbReference type="HGNC" id="HGNC:29041">
    <property type="gene designation" value="KLHL21"/>
</dbReference>
<dbReference type="HPA" id="ENSG00000162413">
    <property type="expression patterns" value="Tissue enhanced (skeletal)"/>
</dbReference>
<dbReference type="MIM" id="616262">
    <property type="type" value="gene"/>
</dbReference>
<dbReference type="neXtProt" id="NX_Q9UJP4"/>
<dbReference type="OpenTargets" id="ENSG00000162413"/>
<dbReference type="PharmGKB" id="PA134989246"/>
<dbReference type="VEuPathDB" id="HostDB:ENSG00000162413"/>
<dbReference type="eggNOG" id="KOG4441">
    <property type="taxonomic scope" value="Eukaryota"/>
</dbReference>
<dbReference type="GeneTree" id="ENSGT00940000158631"/>
<dbReference type="HOGENOM" id="CLU_004253_14_6_1"/>
<dbReference type="InParanoid" id="Q9UJP4"/>
<dbReference type="OMA" id="TWSVVGQ"/>
<dbReference type="OrthoDB" id="45365at2759"/>
<dbReference type="PAN-GO" id="Q9UJP4">
    <property type="GO annotations" value="0 GO annotations based on evolutionary models"/>
</dbReference>
<dbReference type="PhylomeDB" id="Q9UJP4"/>
<dbReference type="TreeFam" id="TF329218"/>
<dbReference type="PathwayCommons" id="Q9UJP4"/>
<dbReference type="Reactome" id="R-HSA-8951664">
    <property type="pathway name" value="Neddylation"/>
</dbReference>
<dbReference type="Reactome" id="R-HSA-983168">
    <property type="pathway name" value="Antigen processing: Ubiquitination &amp; Proteasome degradation"/>
</dbReference>
<dbReference type="SignaLink" id="Q9UJP4"/>
<dbReference type="SIGNOR" id="Q9UJP4"/>
<dbReference type="UniPathway" id="UPA00143"/>
<dbReference type="BioGRID-ORCS" id="9903">
    <property type="hits" value="12 hits in 1196 CRISPR screens"/>
</dbReference>
<dbReference type="ChiTaRS" id="KLHL21">
    <property type="organism name" value="human"/>
</dbReference>
<dbReference type="GenomeRNAi" id="9903"/>
<dbReference type="Pharos" id="Q9UJP4">
    <property type="development level" value="Tbio"/>
</dbReference>
<dbReference type="PRO" id="PR:Q9UJP4"/>
<dbReference type="Proteomes" id="UP000005640">
    <property type="component" value="Chromosome 1"/>
</dbReference>
<dbReference type="RNAct" id="Q9UJP4">
    <property type="molecule type" value="protein"/>
</dbReference>
<dbReference type="Bgee" id="ENSG00000162413">
    <property type="expression patterns" value="Expressed in gastrocnemius and 202 other cell types or tissues"/>
</dbReference>
<dbReference type="ExpressionAtlas" id="Q9UJP4">
    <property type="expression patterns" value="baseline and differential"/>
</dbReference>
<dbReference type="GO" id="GO:0031463">
    <property type="term" value="C:Cul3-RING ubiquitin ligase complex"/>
    <property type="evidence" value="ECO:0000314"/>
    <property type="project" value="UniProtKB"/>
</dbReference>
<dbReference type="GO" id="GO:0005737">
    <property type="term" value="C:cytoplasm"/>
    <property type="evidence" value="ECO:0000318"/>
    <property type="project" value="GO_Central"/>
</dbReference>
<dbReference type="GO" id="GO:0005829">
    <property type="term" value="C:cytosol"/>
    <property type="evidence" value="ECO:0000304"/>
    <property type="project" value="Reactome"/>
</dbReference>
<dbReference type="GO" id="GO:0005827">
    <property type="term" value="C:polar microtubule"/>
    <property type="evidence" value="ECO:0000314"/>
    <property type="project" value="UniProtKB"/>
</dbReference>
<dbReference type="GO" id="GO:0097602">
    <property type="term" value="F:cullin family protein binding"/>
    <property type="evidence" value="ECO:0000353"/>
    <property type="project" value="UniProtKB"/>
</dbReference>
<dbReference type="GO" id="GO:1990756">
    <property type="term" value="F:ubiquitin-like ligase-substrate adaptor activity"/>
    <property type="evidence" value="ECO:0000318"/>
    <property type="project" value="GO_Central"/>
</dbReference>
<dbReference type="GO" id="GO:0051301">
    <property type="term" value="P:cell division"/>
    <property type="evidence" value="ECO:0007669"/>
    <property type="project" value="UniProtKB-KW"/>
</dbReference>
<dbReference type="GO" id="GO:0035853">
    <property type="term" value="P:chromosome passenger complex localization to spindle midzone"/>
    <property type="evidence" value="ECO:0000315"/>
    <property type="project" value="UniProtKB"/>
</dbReference>
<dbReference type="GO" id="GO:0043161">
    <property type="term" value="P:proteasome-mediated ubiquitin-dependent protein catabolic process"/>
    <property type="evidence" value="ECO:0000318"/>
    <property type="project" value="GO_Central"/>
</dbReference>
<dbReference type="GO" id="GO:0016567">
    <property type="term" value="P:protein ubiquitination"/>
    <property type="evidence" value="ECO:0000314"/>
    <property type="project" value="UniProtKB"/>
</dbReference>
<dbReference type="GO" id="GO:0032465">
    <property type="term" value="P:regulation of cytokinesis"/>
    <property type="evidence" value="ECO:0000315"/>
    <property type="project" value="UniProtKB"/>
</dbReference>
<dbReference type="CDD" id="cd18460">
    <property type="entry name" value="BACK_KLHL21"/>
    <property type="match status" value="1"/>
</dbReference>
<dbReference type="CDD" id="cd18250">
    <property type="entry name" value="BTB_POZ_KLHL21"/>
    <property type="match status" value="1"/>
</dbReference>
<dbReference type="FunFam" id="1.25.40.420:FF:000001">
    <property type="entry name" value="Kelch-like family member 12"/>
    <property type="match status" value="1"/>
</dbReference>
<dbReference type="FunFam" id="3.30.710.10:FF:000001">
    <property type="entry name" value="Kelch-like family member 20"/>
    <property type="match status" value="1"/>
</dbReference>
<dbReference type="FunFam" id="2.120.10.80:FF:000044">
    <property type="entry name" value="Kelch-like family member 21"/>
    <property type="match status" value="1"/>
</dbReference>
<dbReference type="Gene3D" id="1.25.40.420">
    <property type="match status" value="1"/>
</dbReference>
<dbReference type="Gene3D" id="2.120.10.80">
    <property type="entry name" value="Kelch-type beta propeller"/>
    <property type="match status" value="1"/>
</dbReference>
<dbReference type="Gene3D" id="3.30.710.10">
    <property type="entry name" value="Potassium Channel Kv1.1, Chain A"/>
    <property type="match status" value="1"/>
</dbReference>
<dbReference type="InterPro" id="IPR011705">
    <property type="entry name" value="BACK"/>
</dbReference>
<dbReference type="InterPro" id="IPR017096">
    <property type="entry name" value="BTB-kelch_protein"/>
</dbReference>
<dbReference type="InterPro" id="IPR000210">
    <property type="entry name" value="BTB/POZ_dom"/>
</dbReference>
<dbReference type="InterPro" id="IPR030577">
    <property type="entry name" value="BTB/POZ_KLHL21"/>
</dbReference>
<dbReference type="InterPro" id="IPR015915">
    <property type="entry name" value="Kelch-typ_b-propeller"/>
</dbReference>
<dbReference type="InterPro" id="IPR006652">
    <property type="entry name" value="Kelch_1"/>
</dbReference>
<dbReference type="InterPro" id="IPR047069">
    <property type="entry name" value="KLHL21_BACK"/>
</dbReference>
<dbReference type="InterPro" id="IPR011333">
    <property type="entry name" value="SKP1/BTB/POZ_sf"/>
</dbReference>
<dbReference type="PANTHER" id="PTHR45632:SF17">
    <property type="entry name" value="KELCH-LIKE PROTEIN 31"/>
    <property type="match status" value="1"/>
</dbReference>
<dbReference type="PANTHER" id="PTHR45632">
    <property type="entry name" value="LD33804P"/>
    <property type="match status" value="1"/>
</dbReference>
<dbReference type="Pfam" id="PF07707">
    <property type="entry name" value="BACK"/>
    <property type="match status" value="1"/>
</dbReference>
<dbReference type="Pfam" id="PF00651">
    <property type="entry name" value="BTB"/>
    <property type="match status" value="1"/>
</dbReference>
<dbReference type="Pfam" id="PF01344">
    <property type="entry name" value="Kelch_1"/>
    <property type="match status" value="2"/>
</dbReference>
<dbReference type="Pfam" id="PF13964">
    <property type="entry name" value="Kelch_6"/>
    <property type="match status" value="1"/>
</dbReference>
<dbReference type="PIRSF" id="PIRSF037037">
    <property type="entry name" value="Kelch-like_protein_gigaxonin"/>
    <property type="match status" value="1"/>
</dbReference>
<dbReference type="SMART" id="SM00875">
    <property type="entry name" value="BACK"/>
    <property type="match status" value="1"/>
</dbReference>
<dbReference type="SMART" id="SM00225">
    <property type="entry name" value="BTB"/>
    <property type="match status" value="1"/>
</dbReference>
<dbReference type="SMART" id="SM00612">
    <property type="entry name" value="Kelch"/>
    <property type="match status" value="5"/>
</dbReference>
<dbReference type="SUPFAM" id="SSF117281">
    <property type="entry name" value="Kelch motif"/>
    <property type="match status" value="1"/>
</dbReference>
<dbReference type="SUPFAM" id="SSF54695">
    <property type="entry name" value="POZ domain"/>
    <property type="match status" value="1"/>
</dbReference>
<dbReference type="PROSITE" id="PS50097">
    <property type="entry name" value="BTB"/>
    <property type="match status" value="1"/>
</dbReference>
<proteinExistence type="evidence at protein level"/>
<comment type="function">
    <text evidence="3 4">Substrate-specific adapter of a BCR (BTB-CUL3-RBX1) E3 ubiquitin-protein ligase complex required for efficient chromosome alignment and cytokinesis. The BCR(KLHL21) E3 ubiquitin ligase complex regulates localization of the chromosomal passenger complex (CPC) from chromosomes to the spindle midzone in anaphase and mediates the ubiquitination of AURKB. Ubiquitination of AURKB by BCR(KLHL21) E3 ubiquitin ligase complex may not lead to its degradation by the proteasome.</text>
</comment>
<comment type="pathway">
    <text>Protein modification; protein ubiquitination.</text>
</comment>
<comment type="subunit">
    <text evidence="4">Component of the BCR(KLHL21) E3 ubiquitin ligase complex, at least composed of CUL3, KLHL21 and RBX1.</text>
</comment>
<comment type="interaction">
    <interactant intactId="EBI-8837113">
        <id>Q9UJP4</id>
    </interactant>
    <interactant intactId="EBI-12076930">
        <id>Q6P597-3</id>
        <label>KLC3</label>
    </interactant>
    <organismsDiffer>false</organismsDiffer>
    <experiments>3</experiments>
</comment>
<comment type="subcellular location">
    <subcellularLocation>
        <location evidence="4">Cytoplasm</location>
        <location evidence="4">Cytoskeleton</location>
        <location evidence="4">Spindle</location>
    </subcellularLocation>
    <text>Localizes to the spindle midzone and targets CUL3 to this region.</text>
</comment>
<comment type="alternative products">
    <event type="alternative splicing"/>
    <isoform>
        <id>Q9UJP4-1</id>
        <name>1</name>
        <sequence type="displayed"/>
    </isoform>
    <isoform>
        <id>Q9UJP4-2</id>
        <name>2</name>
        <sequence type="described" ref="VSP_032563 VSP_032564"/>
    </isoform>
</comment>
<comment type="sequence caution" evidence="6">
    <conflict type="erroneous initiation">
        <sequence resource="EMBL-CDS" id="BAA32314"/>
    </conflict>
    <text>Extended N-terminus.</text>
</comment>
<organism>
    <name type="scientific">Homo sapiens</name>
    <name type="common">Human</name>
    <dbReference type="NCBI Taxonomy" id="9606"/>
    <lineage>
        <taxon>Eukaryota</taxon>
        <taxon>Metazoa</taxon>
        <taxon>Chordata</taxon>
        <taxon>Craniata</taxon>
        <taxon>Vertebrata</taxon>
        <taxon>Euteleostomi</taxon>
        <taxon>Mammalia</taxon>
        <taxon>Eutheria</taxon>
        <taxon>Euarchontoglires</taxon>
        <taxon>Primates</taxon>
        <taxon>Haplorrhini</taxon>
        <taxon>Catarrhini</taxon>
        <taxon>Hominidae</taxon>
        <taxon>Homo</taxon>
    </lineage>
</organism>
<feature type="chain" id="PRO_0000119125" description="Kelch-like protein 21">
    <location>
        <begin position="1"/>
        <end position="597"/>
    </location>
</feature>
<feature type="domain" description="BTB" evidence="1">
    <location>
        <begin position="35"/>
        <end position="103"/>
    </location>
</feature>
<feature type="domain" description="BACK">
    <location>
        <begin position="138"/>
        <end position="239"/>
    </location>
</feature>
<feature type="repeat" description="Kelch 1">
    <location>
        <begin position="287"/>
        <end position="335"/>
    </location>
</feature>
<feature type="repeat" description="Kelch 2">
    <location>
        <begin position="336"/>
        <end position="382"/>
    </location>
</feature>
<feature type="repeat" description="Kelch 3">
    <location>
        <begin position="384"/>
        <end position="422"/>
    </location>
</feature>
<feature type="repeat" description="Kelch 4">
    <location>
        <begin position="423"/>
        <end position="470"/>
    </location>
</feature>
<feature type="repeat" description="Kelch 5">
    <location>
        <begin position="472"/>
        <end position="512"/>
    </location>
</feature>
<feature type="repeat" description="Kelch 6">
    <location>
        <begin position="513"/>
        <end position="560"/>
    </location>
</feature>
<feature type="region of interest" description="Disordered" evidence="2">
    <location>
        <begin position="570"/>
        <end position="597"/>
    </location>
</feature>
<feature type="compositionally biased region" description="Basic and acidic residues" evidence="2">
    <location>
        <begin position="583"/>
        <end position="597"/>
    </location>
</feature>
<feature type="splice variant" id="VSP_032563" description="In isoform 2." evidence="5">
    <original>HVGGSLAVLGGKLYVSGGYDNTFELSDVVEAYDPETRA</original>
    <variation>NFQAGQHWKHRLVLILQPKCHRDECLGSTAMMGGSHLN</variation>
    <location>
        <begin position="502"/>
        <end position="539"/>
    </location>
</feature>
<feature type="splice variant" id="VSP_032564" description="In isoform 2." evidence="5">
    <location>
        <begin position="540"/>
        <end position="597"/>
    </location>
</feature>
<feature type="mutagenesis site" description="Abolishes interaction with CUL3." evidence="4">
    <original>DLLQ</original>
    <variation>AALA</variation>
    <location>
        <begin position="114"/>
        <end position="117"/>
    </location>
</feature>
<feature type="sequence conflict" description="In Ref. 6; BAC03453." evidence="6" ref="6">
    <original>R</original>
    <variation>C</variation>
    <location>
        <position position="183"/>
    </location>
</feature>
<feature type="sequence conflict" description="In Ref. 2; BAG52104." evidence="6" ref="2">
    <original>L</original>
    <variation>P</variation>
    <location>
        <position position="380"/>
    </location>
</feature>
<feature type="sequence conflict" description="In Ref. 1; BAA32314." evidence="6" ref="1">
    <original>G</original>
    <variation>D</variation>
    <location sequence="Q9UJP4-2">
        <position position="534"/>
    </location>
</feature>
<keyword id="KW-0025">Alternative splicing</keyword>
<keyword id="KW-0131">Cell cycle</keyword>
<keyword id="KW-0132">Cell division</keyword>
<keyword id="KW-0963">Cytoplasm</keyword>
<keyword id="KW-0206">Cytoskeleton</keyword>
<keyword id="KW-0903">Direct protein sequencing</keyword>
<keyword id="KW-0880">Kelch repeat</keyword>
<keyword id="KW-0498">Mitosis</keyword>
<keyword id="KW-1267">Proteomics identification</keyword>
<keyword id="KW-1185">Reference proteome</keyword>
<keyword id="KW-0677">Repeat</keyword>
<keyword id="KW-0833">Ubl conjugation pathway</keyword>
<protein>
    <recommendedName>
        <fullName>Kelch-like protein 21</fullName>
    </recommendedName>
</protein>